<proteinExistence type="evidence at protein level"/>
<organism>
    <name type="scientific">Homo sapiens</name>
    <name type="common">Human</name>
    <dbReference type="NCBI Taxonomy" id="9606"/>
    <lineage>
        <taxon>Eukaryota</taxon>
        <taxon>Metazoa</taxon>
        <taxon>Chordata</taxon>
        <taxon>Craniata</taxon>
        <taxon>Vertebrata</taxon>
        <taxon>Euteleostomi</taxon>
        <taxon>Mammalia</taxon>
        <taxon>Eutheria</taxon>
        <taxon>Euarchontoglires</taxon>
        <taxon>Primates</taxon>
        <taxon>Haplorrhini</taxon>
        <taxon>Catarrhini</taxon>
        <taxon>Hominidae</taxon>
        <taxon>Homo</taxon>
    </lineage>
</organism>
<sequence>MDDAHESPSDKGGETGESDETAAVPGDPGATDTDGIPEETDGDADVDLKEAAAEEGELESQDVSDLTTVEREDSSLLNPAAKKLKIDTKEKKEKKQKVDEDEIQKMQILVSSFSEEQLNRYEMYRRSAFPKAAIKRLIQSITGTSVSQNVVIAMSGISKVFVGEVVEEALDVCEKWGEMPPLQPKHMREAVRRLKSKGQIPNSKHKKIIFF</sequence>
<evidence type="ECO:0000256" key="1">
    <source>
        <dbReference type="SAM" id="MobiDB-lite"/>
    </source>
</evidence>
<evidence type="ECO:0000269" key="2">
    <source>
    </source>
</evidence>
<evidence type="ECO:0000269" key="3">
    <source>
    </source>
</evidence>
<evidence type="ECO:0000269" key="4">
    <source ref="6"/>
</evidence>
<evidence type="ECO:0000303" key="5">
    <source>
    </source>
</evidence>
<evidence type="ECO:0000305" key="6"/>
<evidence type="ECO:0007744" key="7">
    <source>
        <dbReference type="PDB" id="7EDX"/>
    </source>
</evidence>
<evidence type="ECO:0007744" key="8">
    <source>
        <dbReference type="PDB" id="7EG7"/>
    </source>
</evidence>
<evidence type="ECO:0007744" key="9">
    <source>
        <dbReference type="PDB" id="7EG8"/>
    </source>
</evidence>
<evidence type="ECO:0007744" key="10">
    <source>
        <dbReference type="PDB" id="7EG9"/>
    </source>
</evidence>
<evidence type="ECO:0007744" key="11">
    <source>
        <dbReference type="PDB" id="7EGA"/>
    </source>
</evidence>
<evidence type="ECO:0007744" key="12">
    <source>
        <dbReference type="PDB" id="7EGB"/>
    </source>
</evidence>
<evidence type="ECO:0007744" key="13">
    <source>
        <dbReference type="PDB" id="7EGC"/>
    </source>
</evidence>
<evidence type="ECO:0007744" key="14">
    <source>
        <dbReference type="PDB" id="7EGD"/>
    </source>
</evidence>
<evidence type="ECO:0007744" key="15">
    <source>
        <dbReference type="PDB" id="7EGE"/>
    </source>
</evidence>
<evidence type="ECO:0007744" key="16">
    <source>
        <dbReference type="PDB" id="7EGF"/>
    </source>
</evidence>
<evidence type="ECO:0007744" key="17">
    <source>
    </source>
</evidence>
<evidence type="ECO:0007829" key="18">
    <source>
        <dbReference type="PDB" id="1BH9"/>
    </source>
</evidence>
<comment type="function">
    <text evidence="2">The TFIID basal transcription factor complex plays a major role in the initiation of RNA polymerase II (Pol II)-dependent transcription (PubMed:33795473). TFIID recognizes and binds promoters with or without a TATA box via its subunit TBP, a TATA-box-binding protein, and promotes assembly of the pre-initiation complex (PIC) (PubMed:33795473). The TFIID complex consists of TBP and TBP-associated factors (TAFs), including TAF1, TAF2, TAF3, TAF4, TAF5, TAF6, TAF7, TAF8, TAF9, TAF10, TAF11, TAF12 and TAF13 (PubMed:33795473). TAF11, together with TAF13 and TBP, play key roles during promoter binding by the TFIID and TFIIA transcription factor complexes (PubMed:33795473).</text>
</comment>
<comment type="subunit">
    <text evidence="2 3">Component of the TFIID basal transcription factor complex, composed of TATA-box-binding protein TBP, and a number of TBP-associated factors (TAFs), including TAF1, TAF2, TAF3, TAF4, TAF5, TAF6, TAF7, TAF8, TAF9, TAF10, TAF11, TAF12 and TAF13 (PubMed:33795473). Interacts with TAF13 both in vitro and intracellularly; also interacts directly with TBP (PubMed:9695952).</text>
</comment>
<comment type="interaction">
    <interactant intactId="EBI-1027005">
        <id>Q15544</id>
    </interactant>
    <interactant intactId="EBI-743771">
        <id>Q92624</id>
        <label>APPBP2</label>
    </interactant>
    <organismsDiffer>false</organismsDiffer>
    <experiments>6</experiments>
</comment>
<comment type="interaction">
    <interactant intactId="EBI-1027005">
        <id>Q15544</id>
    </interactant>
    <interactant intactId="EBI-1026992">
        <id>Q15543</id>
        <label>TAF13</label>
    </interactant>
    <organismsDiffer>false</organismsDiffer>
    <experiments>2</experiments>
</comment>
<comment type="subcellular location">
    <subcellularLocation>
        <location>Nucleus</location>
    </subcellularLocation>
</comment>
<comment type="alternative products">
    <event type="alternative splicing"/>
    <isoform>
        <id>Q15544-1</id>
        <name>1</name>
        <sequence type="displayed"/>
    </isoform>
    <isoform>
        <id>Q15544-2</id>
        <name>2</name>
        <sequence type="described" ref="VSP_044936"/>
    </isoform>
</comment>
<comment type="domain">
    <text>TBP and TAFII18 bind to distinct domains of TAFII28.</text>
</comment>
<comment type="similarity">
    <text evidence="6">Belongs to the TAF11 family.</text>
</comment>
<comment type="sequence caution" evidence="6">
    <conflict type="frameshift">
        <sequence resource="EMBL-CDS" id="AAF22038"/>
    </conflict>
</comment>
<protein>
    <recommendedName>
        <fullName>Transcription initiation factor TFIID subunit 11</fullName>
    </recommendedName>
    <alternativeName>
        <fullName>TFIID subunit p30-beta</fullName>
    </alternativeName>
    <alternativeName>
        <fullName>Transcription initiation factor TFIID 28 kDa subunit</fullName>
        <shortName>TAF(II)28</shortName>
        <shortName>TAFII-28</shortName>
        <shortName>TAFII28</shortName>
    </alternativeName>
</protein>
<keyword id="KW-0002">3D-structure</keyword>
<keyword id="KW-0007">Acetylation</keyword>
<keyword id="KW-0025">Alternative splicing</keyword>
<keyword id="KW-0903">Direct protein sequencing</keyword>
<keyword id="KW-0539">Nucleus</keyword>
<keyword id="KW-1267">Proteomics identification</keyword>
<keyword id="KW-1185">Reference proteome</keyword>
<keyword id="KW-0804">Transcription</keyword>
<keyword id="KW-0805">Transcription regulation</keyword>
<name>TAF11_HUMAN</name>
<dbReference type="EMBL" id="X83928">
    <property type="protein sequence ID" value="CAA58780.1"/>
    <property type="molecule type" value="mRNA"/>
</dbReference>
<dbReference type="EMBL" id="D63705">
    <property type="protein sequence ID" value="BAA23620.1"/>
    <property type="molecule type" value="mRNA"/>
</dbReference>
<dbReference type="EMBL" id="AK302226">
    <property type="protein sequence ID" value="BAG63580.1"/>
    <property type="molecule type" value="mRNA"/>
</dbReference>
<dbReference type="EMBL" id="AK313475">
    <property type="protein sequence ID" value="BAG36260.1"/>
    <property type="molecule type" value="mRNA"/>
</dbReference>
<dbReference type="EMBL" id="CR542068">
    <property type="protein sequence ID" value="CAG46865.1"/>
    <property type="molecule type" value="mRNA"/>
</dbReference>
<dbReference type="EMBL" id="BT019404">
    <property type="protein sequence ID" value="AAV38211.1"/>
    <property type="molecule type" value="mRNA"/>
</dbReference>
<dbReference type="EMBL" id="BT019405">
    <property type="protein sequence ID" value="AAV38212.1"/>
    <property type="molecule type" value="mRNA"/>
</dbReference>
<dbReference type="EMBL" id="AY217767">
    <property type="protein sequence ID" value="AAO25652.1"/>
    <property type="molecule type" value="Genomic_DNA"/>
</dbReference>
<dbReference type="EMBL" id="AL033520">
    <property type="status" value="NOT_ANNOTATED_CDS"/>
    <property type="molecule type" value="Genomic_DNA"/>
</dbReference>
<dbReference type="EMBL" id="BC021972">
    <property type="protein sequence ID" value="AAH21972.1"/>
    <property type="molecule type" value="mRNA"/>
</dbReference>
<dbReference type="EMBL" id="AF118094">
    <property type="protein sequence ID" value="AAF22038.1"/>
    <property type="status" value="ALT_SEQ"/>
    <property type="molecule type" value="mRNA"/>
</dbReference>
<dbReference type="CCDS" id="CCDS4797.1">
    <molecule id="Q15544-1"/>
</dbReference>
<dbReference type="CCDS" id="CCDS59014.1">
    <molecule id="Q15544-2"/>
</dbReference>
<dbReference type="PIR" id="JC4540">
    <property type="entry name" value="JC4540"/>
</dbReference>
<dbReference type="RefSeq" id="NP_001257417.1">
    <molecule id="Q15544-2"/>
    <property type="nucleotide sequence ID" value="NM_001270488.1"/>
</dbReference>
<dbReference type="RefSeq" id="NP_005634.1">
    <molecule id="Q15544-1"/>
    <property type="nucleotide sequence ID" value="NM_005643.4"/>
</dbReference>
<dbReference type="PDB" id="1BH8">
    <property type="method" value="X-ray"/>
    <property type="resolution" value="3.00 A"/>
    <property type="chains" value="B=113-201"/>
</dbReference>
<dbReference type="PDB" id="1BH9">
    <property type="method" value="X-ray"/>
    <property type="resolution" value="2.60 A"/>
    <property type="chains" value="B=113-201"/>
</dbReference>
<dbReference type="PDB" id="6MZD">
    <property type="method" value="EM"/>
    <property type="resolution" value="9.80 A"/>
    <property type="chains" value="P=1-211"/>
</dbReference>
<dbReference type="PDB" id="6MZL">
    <property type="method" value="EM"/>
    <property type="resolution" value="23.00 A"/>
    <property type="chains" value="P=1-211"/>
</dbReference>
<dbReference type="PDB" id="7EDX">
    <property type="method" value="EM"/>
    <property type="resolution" value="4.50 A"/>
    <property type="chains" value="k=1-211"/>
</dbReference>
<dbReference type="PDB" id="7EG7">
    <property type="method" value="EM"/>
    <property type="resolution" value="6.20 A"/>
    <property type="chains" value="k=1-211"/>
</dbReference>
<dbReference type="PDB" id="7EG8">
    <property type="method" value="EM"/>
    <property type="resolution" value="7.40 A"/>
    <property type="chains" value="k=1-211"/>
</dbReference>
<dbReference type="PDB" id="7EG9">
    <property type="method" value="EM"/>
    <property type="resolution" value="3.70 A"/>
    <property type="chains" value="k=1-211"/>
</dbReference>
<dbReference type="PDB" id="7EGA">
    <property type="method" value="EM"/>
    <property type="resolution" value="4.10 A"/>
    <property type="chains" value="k=1-211"/>
</dbReference>
<dbReference type="PDB" id="7EGB">
    <property type="method" value="EM"/>
    <property type="resolution" value="3.30 A"/>
    <property type="chains" value="k=1-211"/>
</dbReference>
<dbReference type="PDB" id="7EGC">
    <property type="method" value="EM"/>
    <property type="resolution" value="3.90 A"/>
    <property type="chains" value="k=1-211"/>
</dbReference>
<dbReference type="PDB" id="7EGD">
    <property type="method" value="EM"/>
    <property type="resolution" value="6.75 A"/>
    <property type="chains" value="k=1-211"/>
</dbReference>
<dbReference type="PDB" id="7EGE">
    <property type="method" value="EM"/>
    <property type="resolution" value="9.00 A"/>
    <property type="chains" value="k=1-211"/>
</dbReference>
<dbReference type="PDB" id="7EGF">
    <property type="method" value="EM"/>
    <property type="resolution" value="3.16 A"/>
    <property type="chains" value="k=1-211"/>
</dbReference>
<dbReference type="PDB" id="7EGI">
    <property type="method" value="EM"/>
    <property type="resolution" value="9.82 A"/>
    <property type="chains" value="k=1-211"/>
</dbReference>
<dbReference type="PDB" id="7EGJ">
    <property type="method" value="EM"/>
    <property type="resolution" value="8.64 A"/>
    <property type="chains" value="k=1-211"/>
</dbReference>
<dbReference type="PDB" id="7ENA">
    <property type="method" value="EM"/>
    <property type="resolution" value="4.07 A"/>
    <property type="chains" value="Dk=1-211"/>
</dbReference>
<dbReference type="PDB" id="7ENC">
    <property type="method" value="EM"/>
    <property type="resolution" value="4.13 A"/>
    <property type="chains" value="Dk=1-211"/>
</dbReference>
<dbReference type="PDB" id="8GXQ">
    <property type="method" value="EM"/>
    <property type="resolution" value="5.04 A"/>
    <property type="chains" value="Dk=1-211"/>
</dbReference>
<dbReference type="PDB" id="8GXS">
    <property type="method" value="EM"/>
    <property type="resolution" value="4.16 A"/>
    <property type="chains" value="Dk=1-211"/>
</dbReference>
<dbReference type="PDB" id="8WAK">
    <property type="method" value="EM"/>
    <property type="resolution" value="5.47 A"/>
    <property type="chains" value="k=1-211"/>
</dbReference>
<dbReference type="PDB" id="8WAL">
    <property type="method" value="EM"/>
    <property type="resolution" value="8.52 A"/>
    <property type="chains" value="k=1-211"/>
</dbReference>
<dbReference type="PDB" id="8WAN">
    <property type="method" value="EM"/>
    <property type="resolution" value="6.07 A"/>
    <property type="chains" value="k=1-211"/>
</dbReference>
<dbReference type="PDB" id="8WAO">
    <property type="method" value="EM"/>
    <property type="resolution" value="6.40 A"/>
    <property type="chains" value="k=1-211"/>
</dbReference>
<dbReference type="PDB" id="8WAP">
    <property type="method" value="EM"/>
    <property type="resolution" value="5.85 A"/>
    <property type="chains" value="k=1-211"/>
</dbReference>
<dbReference type="PDB" id="8WAQ">
    <property type="method" value="EM"/>
    <property type="resolution" value="6.29 A"/>
    <property type="chains" value="k=1-211"/>
</dbReference>
<dbReference type="PDB" id="8WAR">
    <property type="method" value="EM"/>
    <property type="resolution" value="7.20 A"/>
    <property type="chains" value="k=1-211"/>
</dbReference>
<dbReference type="PDB" id="8WAS">
    <property type="method" value="EM"/>
    <property type="resolution" value="6.13 A"/>
    <property type="chains" value="k=1-211"/>
</dbReference>
<dbReference type="PDBsum" id="1BH8"/>
<dbReference type="PDBsum" id="1BH9"/>
<dbReference type="PDBsum" id="6MZD"/>
<dbReference type="PDBsum" id="6MZL"/>
<dbReference type="PDBsum" id="7EDX"/>
<dbReference type="PDBsum" id="7EG7"/>
<dbReference type="PDBsum" id="7EG8"/>
<dbReference type="PDBsum" id="7EG9"/>
<dbReference type="PDBsum" id="7EGA"/>
<dbReference type="PDBsum" id="7EGB"/>
<dbReference type="PDBsum" id="7EGC"/>
<dbReference type="PDBsum" id="7EGD"/>
<dbReference type="PDBsum" id="7EGE"/>
<dbReference type="PDBsum" id="7EGF"/>
<dbReference type="PDBsum" id="7EGI"/>
<dbReference type="PDBsum" id="7EGJ"/>
<dbReference type="PDBsum" id="7ENA"/>
<dbReference type="PDBsum" id="7ENC"/>
<dbReference type="PDBsum" id="8GXQ"/>
<dbReference type="PDBsum" id="8GXS"/>
<dbReference type="PDBsum" id="8WAK"/>
<dbReference type="PDBsum" id="8WAL"/>
<dbReference type="PDBsum" id="8WAN"/>
<dbReference type="PDBsum" id="8WAO"/>
<dbReference type="PDBsum" id="8WAP"/>
<dbReference type="PDBsum" id="8WAQ"/>
<dbReference type="PDBsum" id="8WAR"/>
<dbReference type="PDBsum" id="8WAS"/>
<dbReference type="EMDB" id="EMD-31075"/>
<dbReference type="EMDB" id="EMD-31107"/>
<dbReference type="EMDB" id="EMD-31108"/>
<dbReference type="EMDB" id="EMD-31109"/>
<dbReference type="EMDB" id="EMD-31110"/>
<dbReference type="EMDB" id="EMD-31111"/>
<dbReference type="EMDB" id="EMD-31112"/>
<dbReference type="EMDB" id="EMD-31113"/>
<dbReference type="EMDB" id="EMD-31114"/>
<dbReference type="EMDB" id="EMD-31115"/>
<dbReference type="EMDB" id="EMD-31118"/>
<dbReference type="EMDB" id="EMD-31119"/>
<dbReference type="EMDB" id="EMD-31204"/>
<dbReference type="EMDB" id="EMD-31207"/>
<dbReference type="EMDB" id="EMD-34359"/>
<dbReference type="EMDB" id="EMD-34360"/>
<dbReference type="EMDB" id="EMD-37395"/>
<dbReference type="EMDB" id="EMD-37396"/>
<dbReference type="EMDB" id="EMD-37398"/>
<dbReference type="EMDB" id="EMD-37399"/>
<dbReference type="EMDB" id="EMD-37400"/>
<dbReference type="EMDB" id="EMD-37401"/>
<dbReference type="EMDB" id="EMD-37402"/>
<dbReference type="EMDB" id="EMD-37403"/>
<dbReference type="EMDB" id="EMD-9302"/>
<dbReference type="EMDB" id="EMD-9305"/>
<dbReference type="SMR" id="Q15544"/>
<dbReference type="BioGRID" id="112745">
    <property type="interactions" value="54"/>
</dbReference>
<dbReference type="ComplexPortal" id="CPX-915">
    <property type="entry name" value="General transcription factor complex TFIID"/>
</dbReference>
<dbReference type="ComplexPortal" id="CPX-930">
    <property type="entry name" value="General transcription factor complex TFIID, TAF4B variant"/>
</dbReference>
<dbReference type="CORUM" id="Q15544"/>
<dbReference type="DIP" id="DIP-495N"/>
<dbReference type="FunCoup" id="Q15544">
    <property type="interactions" value="3781"/>
</dbReference>
<dbReference type="IntAct" id="Q15544">
    <property type="interactions" value="25"/>
</dbReference>
<dbReference type="STRING" id="9606.ENSP00000354633"/>
<dbReference type="BindingDB" id="Q15544"/>
<dbReference type="ChEMBL" id="CHEMBL4523300"/>
<dbReference type="iPTMnet" id="Q15544"/>
<dbReference type="PhosphoSitePlus" id="Q15544"/>
<dbReference type="BioMuta" id="TAF11"/>
<dbReference type="DMDM" id="3024707"/>
<dbReference type="jPOST" id="Q15544"/>
<dbReference type="MassIVE" id="Q15544"/>
<dbReference type="PaxDb" id="9606-ENSP00000354633"/>
<dbReference type="PeptideAtlas" id="Q15544"/>
<dbReference type="ProteomicsDB" id="5489"/>
<dbReference type="ProteomicsDB" id="60626">
    <molecule id="Q15544-1"/>
</dbReference>
<dbReference type="Pumba" id="Q15544"/>
<dbReference type="Antibodypedia" id="15108">
    <property type="antibodies" value="251 antibodies from 25 providers"/>
</dbReference>
<dbReference type="DNASU" id="6882"/>
<dbReference type="Ensembl" id="ENST00000361288.9">
    <molecule id="Q15544-1"/>
    <property type="protein sequence ID" value="ENSP00000354633.4"/>
    <property type="gene ID" value="ENSG00000064995.19"/>
</dbReference>
<dbReference type="Ensembl" id="ENST00000420584.3">
    <molecule id="Q15544-2"/>
    <property type="protein sequence ID" value="ENSP00000408121.2"/>
    <property type="gene ID" value="ENSG00000064995.19"/>
</dbReference>
<dbReference type="GeneID" id="6882"/>
<dbReference type="KEGG" id="hsa:6882"/>
<dbReference type="MANE-Select" id="ENST00000361288.9">
    <property type="protein sequence ID" value="ENSP00000354633.4"/>
    <property type="RefSeq nucleotide sequence ID" value="NM_005643.4"/>
    <property type="RefSeq protein sequence ID" value="NP_005634.1"/>
</dbReference>
<dbReference type="UCSC" id="uc003ojw.3">
    <molecule id="Q15544-1"/>
    <property type="organism name" value="human"/>
</dbReference>
<dbReference type="AGR" id="HGNC:11544"/>
<dbReference type="CTD" id="6882"/>
<dbReference type="DisGeNET" id="6882"/>
<dbReference type="GeneCards" id="TAF11"/>
<dbReference type="HGNC" id="HGNC:11544">
    <property type="gene designation" value="TAF11"/>
</dbReference>
<dbReference type="HPA" id="ENSG00000064995">
    <property type="expression patterns" value="Low tissue specificity"/>
</dbReference>
<dbReference type="MIM" id="600772">
    <property type="type" value="gene"/>
</dbReference>
<dbReference type="neXtProt" id="NX_Q15544"/>
<dbReference type="OpenTargets" id="ENSG00000064995"/>
<dbReference type="PharmGKB" id="PA36319"/>
<dbReference type="VEuPathDB" id="HostDB:ENSG00000064995"/>
<dbReference type="eggNOG" id="KOG3219">
    <property type="taxonomic scope" value="Eukaryota"/>
</dbReference>
<dbReference type="GeneTree" id="ENSGT00390000013228"/>
<dbReference type="HOGENOM" id="CLU_088696_0_0_1"/>
<dbReference type="InParanoid" id="Q15544"/>
<dbReference type="OMA" id="IHECSAT"/>
<dbReference type="OrthoDB" id="9532091at2759"/>
<dbReference type="PAN-GO" id="Q15544">
    <property type="GO annotations" value="3 GO annotations based on evolutionary models"/>
</dbReference>
<dbReference type="PhylomeDB" id="Q15544"/>
<dbReference type="TreeFam" id="TF315132"/>
<dbReference type="PathwayCommons" id="Q15544"/>
<dbReference type="Reactome" id="R-HSA-167161">
    <property type="pathway name" value="HIV Transcription Initiation"/>
</dbReference>
<dbReference type="Reactome" id="R-HSA-167162">
    <property type="pathway name" value="RNA Polymerase II HIV Promoter Escape"/>
</dbReference>
<dbReference type="Reactome" id="R-HSA-167172">
    <property type="pathway name" value="Transcription of the HIV genome"/>
</dbReference>
<dbReference type="Reactome" id="R-HSA-674695">
    <property type="pathway name" value="RNA Polymerase II Pre-transcription Events"/>
</dbReference>
<dbReference type="Reactome" id="R-HSA-6804756">
    <property type="pathway name" value="Regulation of TP53 Activity through Phosphorylation"/>
</dbReference>
<dbReference type="Reactome" id="R-HSA-6807505">
    <property type="pathway name" value="RNA polymerase II transcribes snRNA genes"/>
</dbReference>
<dbReference type="Reactome" id="R-HSA-73776">
    <property type="pathway name" value="RNA Polymerase II Promoter Escape"/>
</dbReference>
<dbReference type="Reactome" id="R-HSA-73779">
    <property type="pathway name" value="RNA Polymerase II Transcription Pre-Initiation And Promoter Opening"/>
</dbReference>
<dbReference type="Reactome" id="R-HSA-75953">
    <property type="pathway name" value="RNA Polymerase II Transcription Initiation"/>
</dbReference>
<dbReference type="Reactome" id="R-HSA-76042">
    <property type="pathway name" value="RNA Polymerase II Transcription Initiation And Promoter Clearance"/>
</dbReference>
<dbReference type="SignaLink" id="Q15544"/>
<dbReference type="SIGNOR" id="Q15544"/>
<dbReference type="BioGRID-ORCS" id="6882">
    <property type="hits" value="81 hits in 1167 CRISPR screens"/>
</dbReference>
<dbReference type="ChiTaRS" id="TAF11">
    <property type="organism name" value="human"/>
</dbReference>
<dbReference type="EvolutionaryTrace" id="Q15544"/>
<dbReference type="GeneWiki" id="TAF11"/>
<dbReference type="GenomeRNAi" id="6882"/>
<dbReference type="Pharos" id="Q15544">
    <property type="development level" value="Tchem"/>
</dbReference>
<dbReference type="PRO" id="PR:Q15544"/>
<dbReference type="Proteomes" id="UP000005640">
    <property type="component" value="Chromosome 6"/>
</dbReference>
<dbReference type="RNAct" id="Q15544">
    <property type="molecule type" value="protein"/>
</dbReference>
<dbReference type="Bgee" id="ENSG00000064995">
    <property type="expression patterns" value="Expressed in amniotic fluid and 210 other cell types or tissues"/>
</dbReference>
<dbReference type="ExpressionAtlas" id="Q15544">
    <property type="expression patterns" value="baseline and differential"/>
</dbReference>
<dbReference type="GO" id="GO:0005794">
    <property type="term" value="C:Golgi apparatus"/>
    <property type="evidence" value="ECO:0000314"/>
    <property type="project" value="HPA"/>
</dbReference>
<dbReference type="GO" id="GO:0005654">
    <property type="term" value="C:nucleoplasm"/>
    <property type="evidence" value="ECO:0000314"/>
    <property type="project" value="HPA"/>
</dbReference>
<dbReference type="GO" id="GO:0005634">
    <property type="term" value="C:nucleus"/>
    <property type="evidence" value="ECO:0000269"/>
    <property type="project" value="ComplexPortal"/>
</dbReference>
<dbReference type="GO" id="GO:0005669">
    <property type="term" value="C:transcription factor TFIID complex"/>
    <property type="evidence" value="ECO:0000314"/>
    <property type="project" value="UniProtKB"/>
</dbReference>
<dbReference type="GO" id="GO:0046966">
    <property type="term" value="F:nuclear thyroid hormone receptor binding"/>
    <property type="evidence" value="ECO:0000353"/>
    <property type="project" value="UniProtKB"/>
</dbReference>
<dbReference type="GO" id="GO:0042809">
    <property type="term" value="F:nuclear vitamin D receptor binding"/>
    <property type="evidence" value="ECO:0000353"/>
    <property type="project" value="UniProtKB"/>
</dbReference>
<dbReference type="GO" id="GO:0046982">
    <property type="term" value="F:protein heterodimerization activity"/>
    <property type="evidence" value="ECO:0007669"/>
    <property type="project" value="InterPro"/>
</dbReference>
<dbReference type="GO" id="GO:0016251">
    <property type="term" value="F:RNA polymerase II general transcription initiation factor activity"/>
    <property type="evidence" value="ECO:0000305"/>
    <property type="project" value="ARUK-UCL"/>
</dbReference>
<dbReference type="GO" id="GO:0017025">
    <property type="term" value="F:TBP-class protein binding"/>
    <property type="evidence" value="ECO:0000353"/>
    <property type="project" value="ARUK-UCL"/>
</dbReference>
<dbReference type="GO" id="GO:0003713">
    <property type="term" value="F:transcription coactivator activity"/>
    <property type="evidence" value="ECO:0000314"/>
    <property type="project" value="UniProtKB"/>
</dbReference>
<dbReference type="GO" id="GO:0042789">
    <property type="term" value="P:mRNA transcription by RNA polymerase II"/>
    <property type="evidence" value="ECO:0000314"/>
    <property type="project" value="ComplexPortal"/>
</dbReference>
<dbReference type="GO" id="GO:0043923">
    <property type="term" value="P:positive regulation by host of viral transcription"/>
    <property type="evidence" value="ECO:0000314"/>
    <property type="project" value="UniProtKB"/>
</dbReference>
<dbReference type="GO" id="GO:0060261">
    <property type="term" value="P:positive regulation of transcription initiation by RNA polymerase II"/>
    <property type="evidence" value="ECO:0000314"/>
    <property type="project" value="ComplexPortal"/>
</dbReference>
<dbReference type="GO" id="GO:0051123">
    <property type="term" value="P:RNA polymerase II preinitiation complex assembly"/>
    <property type="evidence" value="ECO:0000353"/>
    <property type="project" value="ComplexPortal"/>
</dbReference>
<dbReference type="GO" id="GO:0006366">
    <property type="term" value="P:transcription by RNA polymerase II"/>
    <property type="evidence" value="ECO:0000305"/>
    <property type="project" value="UniProtKB"/>
</dbReference>
<dbReference type="GO" id="GO:0006367">
    <property type="term" value="P:transcription initiation at RNA polymerase II promoter"/>
    <property type="evidence" value="ECO:0000305"/>
    <property type="project" value="UniProtKB"/>
</dbReference>
<dbReference type="CDD" id="cd08048">
    <property type="entry name" value="HFD_TAF11"/>
    <property type="match status" value="1"/>
</dbReference>
<dbReference type="FunFam" id="1.10.20.10:FF:000025">
    <property type="entry name" value="Transcription initiation factor TFIID subunit 11"/>
    <property type="match status" value="1"/>
</dbReference>
<dbReference type="Gene3D" id="1.10.20.10">
    <property type="entry name" value="Histone, subunit A"/>
    <property type="match status" value="1"/>
</dbReference>
<dbReference type="InterPro" id="IPR009072">
    <property type="entry name" value="Histone-fold"/>
</dbReference>
<dbReference type="InterPro" id="IPR045127">
    <property type="entry name" value="TAF11-like"/>
</dbReference>
<dbReference type="InterPro" id="IPR006809">
    <property type="entry name" value="TAFII28_dom"/>
</dbReference>
<dbReference type="PANTHER" id="PTHR13218:SF16">
    <property type="entry name" value="TRANSCRIPTION INITIATION FACTOR TFIID SUBUNIT 11"/>
    <property type="match status" value="1"/>
</dbReference>
<dbReference type="PANTHER" id="PTHR13218">
    <property type="entry name" value="TRANSCRIPTION INITIATION FACTOR TFIID SUBUNIT 11-RELATED"/>
    <property type="match status" value="1"/>
</dbReference>
<dbReference type="Pfam" id="PF04719">
    <property type="entry name" value="TAFII28"/>
    <property type="match status" value="1"/>
</dbReference>
<dbReference type="SUPFAM" id="SSF47113">
    <property type="entry name" value="Histone-fold"/>
    <property type="match status" value="1"/>
</dbReference>
<gene>
    <name type="primary">TAF11</name>
    <name type="synonym">TAF2I</name>
    <name type="ORF">PRO2134</name>
</gene>
<feature type="chain" id="PRO_0000118902" description="Transcription initiation factor TFIID subunit 11">
    <location>
        <begin position="1"/>
        <end position="211"/>
    </location>
</feature>
<feature type="region of interest" description="Disordered" evidence="1">
    <location>
        <begin position="1"/>
        <end position="81"/>
    </location>
</feature>
<feature type="compositionally biased region" description="Basic and acidic residues" evidence="1">
    <location>
        <begin position="1"/>
        <end position="14"/>
    </location>
</feature>
<feature type="compositionally biased region" description="Acidic residues" evidence="1">
    <location>
        <begin position="35"/>
        <end position="45"/>
    </location>
</feature>
<feature type="compositionally biased region" description="Acidic residues" evidence="1">
    <location>
        <begin position="53"/>
        <end position="62"/>
    </location>
</feature>
<feature type="modified residue" description="N-acetylmethionine" evidence="17">
    <location>
        <position position="1"/>
    </location>
</feature>
<feature type="splice variant" id="VSP_044936" description="In isoform 2." evidence="5">
    <original>LIQSITGTSVSQNVVIAMSGISKVFVGEVVEEALDVCEKWGEMPPLQPKHMREAVRRLKSKGQIPNSKHKKIIFF</original>
    <variation>HWMCVRSGEKCHHYNPNI</variation>
    <location>
        <begin position="137"/>
        <end position="211"/>
    </location>
</feature>
<feature type="sequence variant" id="VAR_016333" description="In dbSNP:rs15922." evidence="4">
    <original>T</original>
    <variation>R</variation>
    <location>
        <position position="68"/>
    </location>
</feature>
<feature type="sequence variant" id="VAR_052261" description="In dbSNP:rs11537996.">
    <original>S</original>
    <variation>F</variation>
    <location>
        <position position="155"/>
    </location>
</feature>
<feature type="helix" evidence="18">
    <location>
        <begin position="115"/>
        <end position="126"/>
    </location>
</feature>
<feature type="helix" evidence="18">
    <location>
        <begin position="131"/>
        <end position="142"/>
    </location>
</feature>
<feature type="helix" evidence="18">
    <location>
        <begin position="148"/>
        <end position="175"/>
    </location>
</feature>
<feature type="helix" evidence="18">
    <location>
        <begin position="184"/>
        <end position="196"/>
    </location>
</feature>
<reference key="1">
    <citation type="journal article" date="1995" name="EMBO J.">
        <title>Cloning and characterization of hTAFII18, hTAFII20 and hTAFII28: three subunits of the human transcription factor TFIID.</title>
        <authorList>
            <person name="Mengus G."/>
            <person name="May M."/>
            <person name="Jacq X."/>
            <person name="Staub A."/>
            <person name="Tora L."/>
            <person name="Chambon P."/>
            <person name="Davidson I."/>
        </authorList>
    </citation>
    <scope>NUCLEOTIDE SEQUENCE [MRNA] (ISOFORM 1)</scope>
    <scope>PARTIAL PROTEIN SEQUENCE</scope>
</reference>
<reference key="2">
    <citation type="journal article" date="1996" name="Biol. Pharm. Bull.">
        <title>Isolation and characterization of a cDNA encoding a human TFIID subunit containing a variety of putative structural motifs including direct repeats.</title>
        <authorList>
            <person name="Kuzuhara T."/>
            <person name="Horikoshi M."/>
        </authorList>
    </citation>
    <scope>NUCLEOTIDE SEQUENCE [MRNA] (ISOFORM 1)</scope>
</reference>
<reference key="3">
    <citation type="journal article" date="2004" name="Nat. Genet.">
        <title>Complete sequencing and characterization of 21,243 full-length human cDNAs.</title>
        <authorList>
            <person name="Ota T."/>
            <person name="Suzuki Y."/>
            <person name="Nishikawa T."/>
            <person name="Otsuki T."/>
            <person name="Sugiyama T."/>
            <person name="Irie R."/>
            <person name="Wakamatsu A."/>
            <person name="Hayashi K."/>
            <person name="Sato H."/>
            <person name="Nagai K."/>
            <person name="Kimura K."/>
            <person name="Makita H."/>
            <person name="Sekine M."/>
            <person name="Obayashi M."/>
            <person name="Nishi T."/>
            <person name="Shibahara T."/>
            <person name="Tanaka T."/>
            <person name="Ishii S."/>
            <person name="Yamamoto J."/>
            <person name="Saito K."/>
            <person name="Kawai Y."/>
            <person name="Isono Y."/>
            <person name="Nakamura Y."/>
            <person name="Nagahari K."/>
            <person name="Murakami K."/>
            <person name="Yasuda T."/>
            <person name="Iwayanagi T."/>
            <person name="Wagatsuma M."/>
            <person name="Shiratori A."/>
            <person name="Sudo H."/>
            <person name="Hosoiri T."/>
            <person name="Kaku Y."/>
            <person name="Kodaira H."/>
            <person name="Kondo H."/>
            <person name="Sugawara M."/>
            <person name="Takahashi M."/>
            <person name="Kanda K."/>
            <person name="Yokoi T."/>
            <person name="Furuya T."/>
            <person name="Kikkawa E."/>
            <person name="Omura Y."/>
            <person name="Abe K."/>
            <person name="Kamihara K."/>
            <person name="Katsuta N."/>
            <person name="Sato K."/>
            <person name="Tanikawa M."/>
            <person name="Yamazaki M."/>
            <person name="Ninomiya K."/>
            <person name="Ishibashi T."/>
            <person name="Yamashita H."/>
            <person name="Murakawa K."/>
            <person name="Fujimori K."/>
            <person name="Tanai H."/>
            <person name="Kimata M."/>
            <person name="Watanabe M."/>
            <person name="Hiraoka S."/>
            <person name="Chiba Y."/>
            <person name="Ishida S."/>
            <person name="Ono Y."/>
            <person name="Takiguchi S."/>
            <person name="Watanabe S."/>
            <person name="Yosida M."/>
            <person name="Hotuta T."/>
            <person name="Kusano J."/>
            <person name="Kanehori K."/>
            <person name="Takahashi-Fujii A."/>
            <person name="Hara H."/>
            <person name="Tanase T.-O."/>
            <person name="Nomura Y."/>
            <person name="Togiya S."/>
            <person name="Komai F."/>
            <person name="Hara R."/>
            <person name="Takeuchi K."/>
            <person name="Arita M."/>
            <person name="Imose N."/>
            <person name="Musashino K."/>
            <person name="Yuuki H."/>
            <person name="Oshima A."/>
            <person name="Sasaki N."/>
            <person name="Aotsuka S."/>
            <person name="Yoshikawa Y."/>
            <person name="Matsunawa H."/>
            <person name="Ichihara T."/>
            <person name="Shiohata N."/>
            <person name="Sano S."/>
            <person name="Moriya S."/>
            <person name="Momiyama H."/>
            <person name="Satoh N."/>
            <person name="Takami S."/>
            <person name="Terashima Y."/>
            <person name="Suzuki O."/>
            <person name="Nakagawa S."/>
            <person name="Senoh A."/>
            <person name="Mizoguchi H."/>
            <person name="Goto Y."/>
            <person name="Shimizu F."/>
            <person name="Wakebe H."/>
            <person name="Hishigaki H."/>
            <person name="Watanabe T."/>
            <person name="Sugiyama A."/>
            <person name="Takemoto M."/>
            <person name="Kawakami B."/>
            <person name="Yamazaki M."/>
            <person name="Watanabe K."/>
            <person name="Kumagai A."/>
            <person name="Itakura S."/>
            <person name="Fukuzumi Y."/>
            <person name="Fujimori Y."/>
            <person name="Komiyama M."/>
            <person name="Tashiro H."/>
            <person name="Tanigami A."/>
            <person name="Fujiwara T."/>
            <person name="Ono T."/>
            <person name="Yamada K."/>
            <person name="Fujii Y."/>
            <person name="Ozaki K."/>
            <person name="Hirao M."/>
            <person name="Ohmori Y."/>
            <person name="Kawabata A."/>
            <person name="Hikiji T."/>
            <person name="Kobatake N."/>
            <person name="Inagaki H."/>
            <person name="Ikema Y."/>
            <person name="Okamoto S."/>
            <person name="Okitani R."/>
            <person name="Kawakami T."/>
            <person name="Noguchi S."/>
            <person name="Itoh T."/>
            <person name="Shigeta K."/>
            <person name="Senba T."/>
            <person name="Matsumura K."/>
            <person name="Nakajima Y."/>
            <person name="Mizuno T."/>
            <person name="Morinaga M."/>
            <person name="Sasaki M."/>
            <person name="Togashi T."/>
            <person name="Oyama M."/>
            <person name="Hata H."/>
            <person name="Watanabe M."/>
            <person name="Komatsu T."/>
            <person name="Mizushima-Sugano J."/>
            <person name="Satoh T."/>
            <person name="Shirai Y."/>
            <person name="Takahashi Y."/>
            <person name="Nakagawa K."/>
            <person name="Okumura K."/>
            <person name="Nagase T."/>
            <person name="Nomura N."/>
            <person name="Kikuchi H."/>
            <person name="Masuho Y."/>
            <person name="Yamashita R."/>
            <person name="Nakai K."/>
            <person name="Yada T."/>
            <person name="Nakamura Y."/>
            <person name="Ohara O."/>
            <person name="Isogai T."/>
            <person name="Sugano S."/>
        </authorList>
    </citation>
    <scope>NUCLEOTIDE SEQUENCE [LARGE SCALE MRNA] (ISOFORMS 1 AND 2)</scope>
    <source>
        <tissue>Subthalamic nucleus</tissue>
        <tissue>Testis</tissue>
    </source>
</reference>
<reference key="4">
    <citation type="submission" date="2004-06" db="EMBL/GenBank/DDBJ databases">
        <title>Cloning of human full open reading frames in Gateway(TM) system entry vector (pDONR201).</title>
        <authorList>
            <person name="Halleck A."/>
            <person name="Ebert L."/>
            <person name="Mkoundinya M."/>
            <person name="Schick M."/>
            <person name="Eisenstein S."/>
            <person name="Neubert P."/>
            <person name="Kstrang K."/>
            <person name="Schatten R."/>
            <person name="Shen B."/>
            <person name="Henze S."/>
            <person name="Mar W."/>
            <person name="Korn B."/>
            <person name="Zuo D."/>
            <person name="Hu Y."/>
            <person name="LaBaer J."/>
        </authorList>
    </citation>
    <scope>NUCLEOTIDE SEQUENCE [LARGE SCALE MRNA] (ISOFORM 1)</scope>
</reference>
<reference key="5">
    <citation type="submission" date="2004-10" db="EMBL/GenBank/DDBJ databases">
        <title>Cloning of human full-length CDSs in BD Creator(TM) system donor vector.</title>
        <authorList>
            <person name="Kalnine N."/>
            <person name="Chen X."/>
            <person name="Rolfs A."/>
            <person name="Halleck A."/>
            <person name="Hines L."/>
            <person name="Eisenstein S."/>
            <person name="Koundinya M."/>
            <person name="Raphael J."/>
            <person name="Moreira D."/>
            <person name="Kelley T."/>
            <person name="LaBaer J."/>
            <person name="Lin Y."/>
            <person name="Phelan M."/>
            <person name="Farmer A."/>
        </authorList>
    </citation>
    <scope>NUCLEOTIDE SEQUENCE [LARGE SCALE MRNA] (ISOFORM 1)</scope>
</reference>
<reference key="6">
    <citation type="submission" date="2003-01" db="EMBL/GenBank/DDBJ databases">
        <authorList>
            <consortium name="NIEHS SNPs program"/>
        </authorList>
    </citation>
    <scope>NUCLEOTIDE SEQUENCE [GENOMIC DNA]</scope>
    <scope>VARIANT ARG-68</scope>
</reference>
<reference key="7">
    <citation type="journal article" date="2003" name="Nature">
        <title>The DNA sequence and analysis of human chromosome 6.</title>
        <authorList>
            <person name="Mungall A.J."/>
            <person name="Palmer S.A."/>
            <person name="Sims S.K."/>
            <person name="Edwards C.A."/>
            <person name="Ashurst J.L."/>
            <person name="Wilming L."/>
            <person name="Jones M.C."/>
            <person name="Horton R."/>
            <person name="Hunt S.E."/>
            <person name="Scott C.E."/>
            <person name="Gilbert J.G.R."/>
            <person name="Clamp M.E."/>
            <person name="Bethel G."/>
            <person name="Milne S."/>
            <person name="Ainscough R."/>
            <person name="Almeida J.P."/>
            <person name="Ambrose K.D."/>
            <person name="Andrews T.D."/>
            <person name="Ashwell R.I.S."/>
            <person name="Babbage A.K."/>
            <person name="Bagguley C.L."/>
            <person name="Bailey J."/>
            <person name="Banerjee R."/>
            <person name="Barker D.J."/>
            <person name="Barlow K.F."/>
            <person name="Bates K."/>
            <person name="Beare D.M."/>
            <person name="Beasley H."/>
            <person name="Beasley O."/>
            <person name="Bird C.P."/>
            <person name="Blakey S.E."/>
            <person name="Bray-Allen S."/>
            <person name="Brook J."/>
            <person name="Brown A.J."/>
            <person name="Brown J.Y."/>
            <person name="Burford D.C."/>
            <person name="Burrill W."/>
            <person name="Burton J."/>
            <person name="Carder C."/>
            <person name="Carter N.P."/>
            <person name="Chapman J.C."/>
            <person name="Clark S.Y."/>
            <person name="Clark G."/>
            <person name="Clee C.M."/>
            <person name="Clegg S."/>
            <person name="Cobley V."/>
            <person name="Collier R.E."/>
            <person name="Collins J.E."/>
            <person name="Colman L.K."/>
            <person name="Corby N.R."/>
            <person name="Coville G.J."/>
            <person name="Culley K.M."/>
            <person name="Dhami P."/>
            <person name="Davies J."/>
            <person name="Dunn M."/>
            <person name="Earthrowl M.E."/>
            <person name="Ellington A.E."/>
            <person name="Evans K.A."/>
            <person name="Faulkner L."/>
            <person name="Francis M.D."/>
            <person name="Frankish A."/>
            <person name="Frankland J."/>
            <person name="French L."/>
            <person name="Garner P."/>
            <person name="Garnett J."/>
            <person name="Ghori M.J."/>
            <person name="Gilby L.M."/>
            <person name="Gillson C.J."/>
            <person name="Glithero R.J."/>
            <person name="Grafham D.V."/>
            <person name="Grant M."/>
            <person name="Gribble S."/>
            <person name="Griffiths C."/>
            <person name="Griffiths M.N.D."/>
            <person name="Hall R."/>
            <person name="Halls K.S."/>
            <person name="Hammond S."/>
            <person name="Harley J.L."/>
            <person name="Hart E.A."/>
            <person name="Heath P.D."/>
            <person name="Heathcott R."/>
            <person name="Holmes S.J."/>
            <person name="Howden P.J."/>
            <person name="Howe K.L."/>
            <person name="Howell G.R."/>
            <person name="Huckle E."/>
            <person name="Humphray S.J."/>
            <person name="Humphries M.D."/>
            <person name="Hunt A.R."/>
            <person name="Johnson C.M."/>
            <person name="Joy A.A."/>
            <person name="Kay M."/>
            <person name="Keenan S.J."/>
            <person name="Kimberley A.M."/>
            <person name="King A."/>
            <person name="Laird G.K."/>
            <person name="Langford C."/>
            <person name="Lawlor S."/>
            <person name="Leongamornlert D.A."/>
            <person name="Leversha M."/>
            <person name="Lloyd C.R."/>
            <person name="Lloyd D.M."/>
            <person name="Loveland J.E."/>
            <person name="Lovell J."/>
            <person name="Martin S."/>
            <person name="Mashreghi-Mohammadi M."/>
            <person name="Maslen G.L."/>
            <person name="Matthews L."/>
            <person name="McCann O.T."/>
            <person name="McLaren S.J."/>
            <person name="McLay K."/>
            <person name="McMurray A."/>
            <person name="Moore M.J.F."/>
            <person name="Mullikin J.C."/>
            <person name="Niblett D."/>
            <person name="Nickerson T."/>
            <person name="Novik K.L."/>
            <person name="Oliver K."/>
            <person name="Overton-Larty E.K."/>
            <person name="Parker A."/>
            <person name="Patel R."/>
            <person name="Pearce A.V."/>
            <person name="Peck A.I."/>
            <person name="Phillimore B.J.C.T."/>
            <person name="Phillips S."/>
            <person name="Plumb R.W."/>
            <person name="Porter K.M."/>
            <person name="Ramsey Y."/>
            <person name="Ranby S.A."/>
            <person name="Rice C.M."/>
            <person name="Ross M.T."/>
            <person name="Searle S.M."/>
            <person name="Sehra H.K."/>
            <person name="Sheridan E."/>
            <person name="Skuce C.D."/>
            <person name="Smith S."/>
            <person name="Smith M."/>
            <person name="Spraggon L."/>
            <person name="Squares S.L."/>
            <person name="Steward C.A."/>
            <person name="Sycamore N."/>
            <person name="Tamlyn-Hall G."/>
            <person name="Tester J."/>
            <person name="Theaker A.J."/>
            <person name="Thomas D.W."/>
            <person name="Thorpe A."/>
            <person name="Tracey A."/>
            <person name="Tromans A."/>
            <person name="Tubby B."/>
            <person name="Wall M."/>
            <person name="Wallis J.M."/>
            <person name="West A.P."/>
            <person name="White S.S."/>
            <person name="Whitehead S.L."/>
            <person name="Whittaker H."/>
            <person name="Wild A."/>
            <person name="Willey D.J."/>
            <person name="Wilmer T.E."/>
            <person name="Wood J.M."/>
            <person name="Wray P.W."/>
            <person name="Wyatt J.C."/>
            <person name="Young L."/>
            <person name="Younger R.M."/>
            <person name="Bentley D.R."/>
            <person name="Coulson A."/>
            <person name="Durbin R.M."/>
            <person name="Hubbard T."/>
            <person name="Sulston J.E."/>
            <person name="Dunham I."/>
            <person name="Rogers J."/>
            <person name="Beck S."/>
        </authorList>
    </citation>
    <scope>NUCLEOTIDE SEQUENCE [LARGE SCALE GENOMIC DNA]</scope>
</reference>
<reference key="8">
    <citation type="journal article" date="2004" name="Genome Res.">
        <title>The status, quality, and expansion of the NIH full-length cDNA project: the Mammalian Gene Collection (MGC).</title>
        <authorList>
            <consortium name="The MGC Project Team"/>
        </authorList>
    </citation>
    <scope>NUCLEOTIDE SEQUENCE [LARGE SCALE MRNA] (ISOFORM 1)</scope>
    <source>
        <tissue>Lung</tissue>
    </source>
</reference>
<reference key="9">
    <citation type="submission" date="1999-01" db="EMBL/GenBank/DDBJ databases">
        <title>Functional prediction of the coding sequences of 33 new genes deduced by analysis of cDNA clones from human fetal liver.</title>
        <authorList>
            <person name="Zhang C."/>
            <person name="Yu Y."/>
            <person name="Zhang S."/>
            <person name="Wei H."/>
            <person name="Zhou G."/>
            <person name="Bi J."/>
            <person name="Zhang Y."/>
            <person name="Liu M."/>
            <person name="He F."/>
        </authorList>
    </citation>
    <scope>NUCLEOTIDE SEQUENCE [LARGE SCALE MRNA] OF 50-211 (ISOFORM 1)</scope>
    <source>
        <tissue>Fetal liver</tissue>
    </source>
</reference>
<reference key="10">
    <citation type="journal article" date="2007" name="Science">
        <title>ATM and ATR substrate analysis reveals extensive protein networks responsive to DNA damage.</title>
        <authorList>
            <person name="Matsuoka S."/>
            <person name="Ballif B.A."/>
            <person name="Smogorzewska A."/>
            <person name="McDonald E.R. III"/>
            <person name="Hurov K.E."/>
            <person name="Luo J."/>
            <person name="Bakalarski C.E."/>
            <person name="Zhao Z."/>
            <person name="Solimini N."/>
            <person name="Lerenthal Y."/>
            <person name="Shiloh Y."/>
            <person name="Gygi S.P."/>
            <person name="Elledge S.J."/>
        </authorList>
    </citation>
    <scope>IDENTIFICATION BY MASS SPECTROMETRY [LARGE SCALE ANALYSIS]</scope>
    <source>
        <tissue>Embryonic kidney</tissue>
    </source>
</reference>
<reference key="11">
    <citation type="journal article" date="2010" name="Sci. Signal.">
        <title>Quantitative phosphoproteomics reveals widespread full phosphorylation site occupancy during mitosis.</title>
        <authorList>
            <person name="Olsen J.V."/>
            <person name="Vermeulen M."/>
            <person name="Santamaria A."/>
            <person name="Kumar C."/>
            <person name="Miller M.L."/>
            <person name="Jensen L.J."/>
            <person name="Gnad F."/>
            <person name="Cox J."/>
            <person name="Jensen T.S."/>
            <person name="Nigg E.A."/>
            <person name="Brunak S."/>
            <person name="Mann M."/>
        </authorList>
    </citation>
    <scope>ACETYLATION [LARGE SCALE ANALYSIS] AT MET-1</scope>
    <scope>IDENTIFICATION BY MASS SPECTROMETRY [LARGE SCALE ANALYSIS]</scope>
    <source>
        <tissue>Cervix carcinoma</tissue>
    </source>
</reference>
<reference key="12">
    <citation type="journal article" date="1998" name="Cell">
        <title>Human TAF(II)28 and TAF(II)18 interact through a histone fold encoded by atypical evolutionary conserved motifs also found in the SPT3 family.</title>
        <authorList>
            <person name="Birck C."/>
            <person name="Poch O."/>
            <person name="Romier C."/>
            <person name="Ruff M."/>
            <person name="Mengus G."/>
            <person name="Lavigne A.C."/>
            <person name="Davidson I."/>
            <person name="Moras D."/>
        </authorList>
    </citation>
    <scope>X-RAY CRYSTALLOGRAPHY (3.0 ANGSTROMS) OF 113-201 IN COMPLEX WITH TAF13</scope>
</reference>
<reference evidence="7 8 9 10 11 12 13 14 15 16" key="13">
    <citation type="journal article" date="2021" name="Science">
        <title>Structural insights into preinitiation complex assembly on core promoters.</title>
        <authorList>
            <person name="Chen X."/>
            <person name="Qi Y."/>
            <person name="Wu Z."/>
            <person name="Wang X."/>
            <person name="Li J."/>
            <person name="Zhao D."/>
            <person name="Hou H."/>
            <person name="Li Y."/>
            <person name="Yu Z."/>
            <person name="Liu W."/>
            <person name="Wang M."/>
            <person name="Ren Y."/>
            <person name="Li Z."/>
            <person name="Yang H."/>
            <person name="Xu Y."/>
        </authorList>
    </citation>
    <scope>STRUCTURE BY ELECTRON MICROSCOPY (3.16 ANGSTROMS)</scope>
    <scope>FUNCTION</scope>
    <scope>IDENTIFICATION IN THE TFIID COMPLEX</scope>
    <scope>SUBUNIT</scope>
</reference>
<accession>Q15544</accession>
<accession>B2R8R3</accession>
<accession>B4DY18</accession>
<accession>Q9UHS0</accession>